<gene>
    <name type="primary">HAX1</name>
</gene>
<comment type="function">
    <text evidence="2">Recruits the Arp2/3 complex to the cell cortex and regulates reorganization of the cortical actin cytoskeleton via its interaction with KCNC3 and the Arp2/3 complex. Slows down the rate of inactivation of KCNC3 channels. Promotes GNA13-mediated cell migration. Involved in the clathrin-mediated endocytosis pathway. May be involved in internalization of ABC transporters such as ABCB11. May inhibit CASP9 and CASP3. Promotes cell survival. May regulate intracellular calcium pools.</text>
</comment>
<comment type="subunit">
    <text evidence="2 3 4">Interacts with ABCB1, ABCB4 and ABCB11 (By similarity). Directly associates with HCLS1/HS1, through binding to its N-terminal region (By similarity). Interacts with CTTN (By similarity). Interacts with PKD2. Interacts with GNA13. Interacts with CASP9. Interacts with ITGB6. Interacts with PLN and ATP2A2; these interactions are inhibited by calcium. Interacts with GRB7. Interacts (via C-terminus) with XIAP/BIRC4 (via BIR 2 domain and BIR 3 domain) and this interaction blocks ubiquitination of XIAP/BIRC4. Interacts with TPC2. Interacts with KCNC3. Interacts with XPO1 (By similarity). Interacts with RNF217 (By similarity). Interacts with UCP3; the interaction is direct and calcium-dependent (By similarity). Interacts with MAPRE2; this interaction regulates cell migration in keratinocytes (By similarity).</text>
</comment>
<comment type="subcellular location">
    <subcellularLocation>
        <location evidence="2">Mitochondrion matrix</location>
    </subcellularLocation>
    <subcellularLocation>
        <location evidence="2">Endoplasmic reticulum</location>
    </subcellularLocation>
    <subcellularLocation>
        <location evidence="2">Nucleus membrane</location>
    </subcellularLocation>
    <subcellularLocation>
        <location evidence="3">Cytoplasmic vesicle</location>
    </subcellularLocation>
    <subcellularLocation>
        <location evidence="2">Cytoplasm</location>
        <location evidence="2">Cell cortex</location>
    </subcellularLocation>
    <subcellularLocation>
        <location evidence="2">Cell membrane</location>
        <topology evidence="2">Peripheral membrane protein</topology>
        <orientation evidence="2">Cytoplasmic side</orientation>
    </subcellularLocation>
    <subcellularLocation>
        <location evidence="4">Sarcoplasmic reticulum</location>
    </subcellularLocation>
    <subcellularLocation>
        <location evidence="2">Cytoplasm</location>
        <location evidence="2">P-body</location>
    </subcellularLocation>
    <subcellularLocation>
        <location evidence="2">Cytoplasm</location>
    </subcellularLocation>
    <subcellularLocation>
        <location evidence="2">Nucleus</location>
    </subcellularLocation>
    <text evidence="2">Predominantly cytoplasmic. Also detected in the nucleus when nuclear export is inhibited (in vitro).</text>
</comment>
<comment type="similarity">
    <text evidence="6">Belongs to the HAX1 family.</text>
</comment>
<protein>
    <recommendedName>
        <fullName>HCLS1-associated protein X-1</fullName>
    </recommendedName>
    <alternativeName>
        <fullName>HS1-associating protein X-1</fullName>
        <shortName>HAX-1</shortName>
    </alternativeName>
</protein>
<dbReference type="EMBL" id="BC112670">
    <property type="protein sequence ID" value="AAI12671.1"/>
    <property type="molecule type" value="mRNA"/>
</dbReference>
<dbReference type="RefSeq" id="NP_001039418.2">
    <property type="nucleotide sequence ID" value="NM_001045953.2"/>
</dbReference>
<dbReference type="FunCoup" id="Q2KIE2">
    <property type="interactions" value="1278"/>
</dbReference>
<dbReference type="STRING" id="9913.ENSBTAP00000017314"/>
<dbReference type="PaxDb" id="9913-ENSBTAP00000017314"/>
<dbReference type="GeneID" id="506895"/>
<dbReference type="KEGG" id="bta:506895"/>
<dbReference type="CTD" id="10456"/>
<dbReference type="eggNOG" id="ENOG502S0AE">
    <property type="taxonomic scope" value="Eukaryota"/>
</dbReference>
<dbReference type="InParanoid" id="Q2KIE2"/>
<dbReference type="OrthoDB" id="5562606at2759"/>
<dbReference type="Proteomes" id="UP000009136">
    <property type="component" value="Unplaced"/>
</dbReference>
<dbReference type="GO" id="GO:0015629">
    <property type="term" value="C:actin cytoskeleton"/>
    <property type="evidence" value="ECO:0000318"/>
    <property type="project" value="GO_Central"/>
</dbReference>
<dbReference type="GO" id="GO:0016324">
    <property type="term" value="C:apical plasma membrane"/>
    <property type="evidence" value="ECO:0000318"/>
    <property type="project" value="GO_Central"/>
</dbReference>
<dbReference type="GO" id="GO:0005938">
    <property type="term" value="C:cell cortex"/>
    <property type="evidence" value="ECO:0007669"/>
    <property type="project" value="UniProtKB-SubCell"/>
</dbReference>
<dbReference type="GO" id="GO:0030136">
    <property type="term" value="C:clathrin-coated vesicle"/>
    <property type="evidence" value="ECO:0000318"/>
    <property type="project" value="GO_Central"/>
</dbReference>
<dbReference type="GO" id="GO:0005759">
    <property type="term" value="C:mitochondrial matrix"/>
    <property type="evidence" value="ECO:0007669"/>
    <property type="project" value="UniProtKB-SubCell"/>
</dbReference>
<dbReference type="GO" id="GO:0005739">
    <property type="term" value="C:mitochondrion"/>
    <property type="evidence" value="ECO:0000318"/>
    <property type="project" value="GO_Central"/>
</dbReference>
<dbReference type="GO" id="GO:0031965">
    <property type="term" value="C:nuclear membrane"/>
    <property type="evidence" value="ECO:0007669"/>
    <property type="project" value="UniProtKB-SubCell"/>
</dbReference>
<dbReference type="GO" id="GO:0000932">
    <property type="term" value="C:P-body"/>
    <property type="evidence" value="ECO:0007669"/>
    <property type="project" value="UniProtKB-SubCell"/>
</dbReference>
<dbReference type="GO" id="GO:0016529">
    <property type="term" value="C:sarcoplasmic reticulum"/>
    <property type="evidence" value="ECO:0000318"/>
    <property type="project" value="GO_Central"/>
</dbReference>
<dbReference type="GO" id="GO:0043066">
    <property type="term" value="P:negative regulation of apoptotic process"/>
    <property type="evidence" value="ECO:0000318"/>
    <property type="project" value="GO_Central"/>
</dbReference>
<dbReference type="GO" id="GO:0030833">
    <property type="term" value="P:regulation of actin filament polymerization"/>
    <property type="evidence" value="ECO:0000318"/>
    <property type="project" value="GO_Central"/>
</dbReference>
<dbReference type="InterPro" id="IPR017248">
    <property type="entry name" value="HAX-1"/>
</dbReference>
<dbReference type="PANTHER" id="PTHR14938">
    <property type="entry name" value="HCLS1-ASSOCIATED PROTEIN X-1"/>
    <property type="match status" value="1"/>
</dbReference>
<dbReference type="PANTHER" id="PTHR14938:SF2">
    <property type="entry name" value="HCLS1-ASSOCIATED PROTEIN X-1"/>
    <property type="match status" value="1"/>
</dbReference>
<dbReference type="PIRSF" id="PIRSF037634">
    <property type="entry name" value="HS1-associating_X-1"/>
    <property type="match status" value="1"/>
</dbReference>
<name>HAX1_BOVIN</name>
<organism>
    <name type="scientific">Bos taurus</name>
    <name type="common">Bovine</name>
    <dbReference type="NCBI Taxonomy" id="9913"/>
    <lineage>
        <taxon>Eukaryota</taxon>
        <taxon>Metazoa</taxon>
        <taxon>Chordata</taxon>
        <taxon>Craniata</taxon>
        <taxon>Vertebrata</taxon>
        <taxon>Euteleostomi</taxon>
        <taxon>Mammalia</taxon>
        <taxon>Eutheria</taxon>
        <taxon>Laurasiatheria</taxon>
        <taxon>Artiodactyla</taxon>
        <taxon>Ruminantia</taxon>
        <taxon>Pecora</taxon>
        <taxon>Bovidae</taxon>
        <taxon>Bovinae</taxon>
        <taxon>Bos</taxon>
    </lineage>
</organism>
<evidence type="ECO:0000250" key="1"/>
<evidence type="ECO:0000250" key="2">
    <source>
        <dbReference type="UniProtKB" id="O00165"/>
    </source>
</evidence>
<evidence type="ECO:0000250" key="3">
    <source>
        <dbReference type="UniProtKB" id="O35387"/>
    </source>
</evidence>
<evidence type="ECO:0000250" key="4">
    <source>
        <dbReference type="UniProtKB" id="Q7TSE9"/>
    </source>
</evidence>
<evidence type="ECO:0000256" key="5">
    <source>
        <dbReference type="SAM" id="MobiDB-lite"/>
    </source>
</evidence>
<evidence type="ECO:0000305" key="6"/>
<accession>Q2KIE2</accession>
<reference key="1">
    <citation type="submission" date="2006-01" db="EMBL/GenBank/DDBJ databases">
        <authorList>
            <consortium name="NIH - Mammalian Gene Collection (MGC) project"/>
        </authorList>
    </citation>
    <scope>NUCLEOTIDE SEQUENCE [LARGE SCALE MRNA]</scope>
    <source>
        <strain>Hereford</strain>
        <tissue>Testis</tissue>
    </source>
</reference>
<sequence length="279" mass="31415">MSLFDLFRGFFGFSGPRSHRDPFFGGMTRDEDEDDEEEEEEGVTWGRGNSRFEGPQSPEEFSFGFSFSPGGGMRFHDNFGFDDLVRDFNNIFSEMGAWTLPSRPPELPGPESETPGERRQEGQTLRDSMLKYPDSHQPKIFGGGLESDARSESSKPAPDWGPQRPFHRFDDTWPVTPHSRAREDNDLDTQVSQEGLGPVLQPQPKSYFKSVSVTKITKPDGTVEERRTVVDSEGRKETTVTHQEAGSSPRDGPESPTPPSLDDSSSILDLFLGRWFRSR</sequence>
<keyword id="KW-0007">Acetylation</keyword>
<keyword id="KW-1003">Cell membrane</keyword>
<keyword id="KW-0963">Cytoplasm</keyword>
<keyword id="KW-0968">Cytoplasmic vesicle</keyword>
<keyword id="KW-0256">Endoplasmic reticulum</keyword>
<keyword id="KW-0472">Membrane</keyword>
<keyword id="KW-0496">Mitochondrion</keyword>
<keyword id="KW-0539">Nucleus</keyword>
<keyword id="KW-0597">Phosphoprotein</keyword>
<keyword id="KW-1185">Reference proteome</keyword>
<keyword id="KW-0703">Sarcoplasmic reticulum</keyword>
<proteinExistence type="evidence at transcript level"/>
<feature type="initiator methionine" description="Removed" evidence="2">
    <location>
        <position position="1"/>
    </location>
</feature>
<feature type="chain" id="PRO_0000313800" description="HCLS1-associated protein X-1">
    <location>
        <begin position="2"/>
        <end position="279"/>
    </location>
</feature>
<feature type="region of interest" description="Required for localization in mitochondria" evidence="1">
    <location>
        <begin position="2"/>
        <end position="42"/>
    </location>
</feature>
<feature type="region of interest" description="Disordered" evidence="5">
    <location>
        <begin position="16"/>
        <end position="67"/>
    </location>
</feature>
<feature type="region of interest" description="Disordered" evidence="5">
    <location>
        <begin position="97"/>
        <end position="265"/>
    </location>
</feature>
<feature type="region of interest" description="Involved in HCLS1 binding" evidence="1">
    <location>
        <begin position="114"/>
        <end position="279"/>
    </location>
</feature>
<feature type="region of interest" description="Involved in CASP9 binding" evidence="1">
    <location>
        <begin position="175"/>
        <end position="206"/>
    </location>
</feature>
<feature type="region of interest" description="Involved in GNA13 binding" evidence="1">
    <location>
        <begin position="176"/>
        <end position="247"/>
    </location>
</feature>
<feature type="region of interest" description="Required for localization in sarcoplasmic reticulum" evidence="1">
    <location>
        <begin position="183"/>
        <end position="279"/>
    </location>
</feature>
<feature type="region of interest" description="Involved in PKD2 binding" evidence="1">
    <location>
        <begin position="184"/>
        <end position="279"/>
    </location>
</feature>
<feature type="region of interest" description="Involved in ATP2A2 binding" evidence="1">
    <location>
        <begin position="203"/>
        <end position="245"/>
    </location>
</feature>
<feature type="region of interest" description="Involved in PLN binding" evidence="1">
    <location>
        <begin position="203"/>
        <end position="225"/>
    </location>
</feature>
<feature type="region of interest" description="Mediates interaction with UCP3" evidence="3">
    <location>
        <begin position="210"/>
        <end position="279"/>
    </location>
</feature>
<feature type="region of interest" description="Required for ITGB6 binding" evidence="1">
    <location>
        <begin position="270"/>
        <end position="279"/>
    </location>
</feature>
<feature type="compositionally biased region" description="Acidic residues" evidence="5">
    <location>
        <begin position="30"/>
        <end position="42"/>
    </location>
</feature>
<feature type="compositionally biased region" description="Low complexity" evidence="5">
    <location>
        <begin position="57"/>
        <end position="67"/>
    </location>
</feature>
<feature type="compositionally biased region" description="Basic and acidic residues" evidence="5">
    <location>
        <begin position="217"/>
        <end position="239"/>
    </location>
</feature>
<feature type="site" description="Cleavage; by caspase-3" evidence="1">
    <location>
        <begin position="127"/>
        <end position="128"/>
    </location>
</feature>
<feature type="modified residue" description="N-acetylserine" evidence="2">
    <location>
        <position position="2"/>
    </location>
</feature>
<feature type="modified residue" description="Phosphoserine" evidence="2">
    <location>
        <position position="192"/>
    </location>
</feature>